<reference key="1">
    <citation type="journal article" date="1999" name="J. Virol.">
        <title>Identification of a spliced gene from Kaposi's sarcoma-associated herpesvirus encoding a protein with similarities to latent membrane proteins 1 and 2A of Epstein-Barr virus.</title>
        <authorList>
            <person name="Glenn M."/>
            <person name="Rainbow L."/>
            <person name="Aurade F."/>
            <person name="Davison A."/>
            <person name="Schulz T.F."/>
        </authorList>
    </citation>
    <scope>NUCLEOTIDE SEQUENCE [LARGE SCALE GENOMIC DNA]</scope>
</reference>
<reference key="2">
    <citation type="journal article" date="2006" name="J. Gen. Virol.">
        <title>Kaposi's sarcoma-associated herpesvirus immune modulation: an overview.</title>
        <authorList>
            <person name="Rezaee S.A.R."/>
            <person name="Cunningham C."/>
            <person name="Davison A.J."/>
            <person name="Blackbourn D.J."/>
        </authorList>
    </citation>
    <scope>NUCLEOTIDE SEQUENCE [LARGE SCALE GENOMIC DNA]</scope>
</reference>
<sequence>MLTSERSYLRYPKNRRWTEAGRFWAPHPENVLFIHKPTMEETRRVALGLRSQLVRNRERKTKAHLLSLELDRLVQVHDSRVRVINADIDAVKQMIGNMTWSDNIDMPQSRSHEPPLVTSPPQASHRNFTVAIVPGDPHFSVDRDLRGELMPTLYMNQNQWLPSFGPWFISLTDNAMQRRVFPKELKGTVNFQNSTSLKLISHTLTTVASTTADFFADARHLTDTQAALCLVNAYFCQKTSRQLPATPDDLLADLPQKLDLLITQLKQESGPGDFSFTYSNPQERASLAPLNKESRYPTAFFQRHKLHAMMAKAGLFPHNKGTGAPGTAPAMDLVFAITSAMFGSDIPPFSAYQWNLRAGIVALEVFILAYGLLEFGQVARGHPNRRLNLVSLLGPKFQPGALPDPNAPMLKRGQLFSFISEHYIIPTLQANPNAPVSFIFPGIILAALEARSTVSHKQPGPFVNLTGSRFNEIFEILNQQLTFRDPLALLQARTALRLATEEGLDVLLSHPSPPTLLQEIIKSQFGGGDDYDRAYFMVLGCLPVVLAVV</sequence>
<feature type="chain" id="PRO_0000423806" description="Capsid vertex component 2">
    <location>
        <begin position="1"/>
        <end position="549"/>
    </location>
</feature>
<feature type="region of interest" description="Interaction with major capsid protein/MCP" evidence="1">
    <location>
        <begin position="1"/>
        <end position="54"/>
    </location>
</feature>
<feature type="strand" evidence="2">
    <location>
        <begin position="128"/>
        <end position="130"/>
    </location>
</feature>
<feature type="strand" evidence="2">
    <location>
        <begin position="138"/>
        <end position="143"/>
    </location>
</feature>
<feature type="helix" evidence="2">
    <location>
        <begin position="145"/>
        <end position="149"/>
    </location>
</feature>
<feature type="helix" evidence="2">
    <location>
        <begin position="150"/>
        <end position="154"/>
    </location>
</feature>
<feature type="turn" evidence="2">
    <location>
        <begin position="157"/>
        <end position="159"/>
    </location>
</feature>
<feature type="strand" evidence="2">
    <location>
        <begin position="160"/>
        <end position="163"/>
    </location>
</feature>
<feature type="helix" evidence="2">
    <location>
        <begin position="166"/>
        <end position="177"/>
    </location>
</feature>
<feature type="helix" evidence="2">
    <location>
        <begin position="183"/>
        <end position="185"/>
    </location>
</feature>
<feature type="helix" evidence="2">
    <location>
        <begin position="188"/>
        <end position="191"/>
    </location>
</feature>
<feature type="helix" evidence="2">
    <location>
        <begin position="197"/>
        <end position="208"/>
    </location>
</feature>
<feature type="turn" evidence="2">
    <location>
        <begin position="209"/>
        <end position="211"/>
    </location>
</feature>
<feature type="helix" evidence="2">
    <location>
        <begin position="223"/>
        <end position="238"/>
    </location>
</feature>
<feature type="helix" evidence="2">
    <location>
        <begin position="247"/>
        <end position="251"/>
    </location>
</feature>
<feature type="helix" evidence="2">
    <location>
        <begin position="254"/>
        <end position="266"/>
    </location>
</feature>
<feature type="helix" evidence="2">
    <location>
        <begin position="281"/>
        <end position="284"/>
    </location>
</feature>
<feature type="helix" evidence="2">
    <location>
        <begin position="290"/>
        <end position="292"/>
    </location>
</feature>
<feature type="turn" evidence="2">
    <location>
        <begin position="298"/>
        <end position="303"/>
    </location>
</feature>
<feature type="helix" evidence="2">
    <location>
        <begin position="305"/>
        <end position="312"/>
    </location>
</feature>
<feature type="helix" evidence="2">
    <location>
        <begin position="333"/>
        <end position="341"/>
    </location>
</feature>
<feature type="turn" evidence="2">
    <location>
        <begin position="349"/>
        <end position="351"/>
    </location>
</feature>
<feature type="helix" evidence="2">
    <location>
        <begin position="354"/>
        <end position="373"/>
    </location>
</feature>
<feature type="helix" evidence="2">
    <location>
        <begin position="389"/>
        <end position="393"/>
    </location>
</feature>
<feature type="helix" evidence="2">
    <location>
        <begin position="394"/>
        <end position="396"/>
    </location>
</feature>
<feature type="helix" evidence="2">
    <location>
        <begin position="414"/>
        <end position="422"/>
    </location>
</feature>
<feature type="helix" evidence="2">
    <location>
        <begin position="424"/>
        <end position="430"/>
    </location>
</feature>
<feature type="helix" evidence="2">
    <location>
        <begin position="436"/>
        <end position="439"/>
    </location>
</feature>
<feature type="helix" evidence="2">
    <location>
        <begin position="441"/>
        <end position="452"/>
    </location>
</feature>
<feature type="strand" evidence="2">
    <location>
        <begin position="462"/>
        <end position="464"/>
    </location>
</feature>
<feature type="helix" evidence="2">
    <location>
        <begin position="468"/>
        <end position="470"/>
    </location>
</feature>
<feature type="helix" evidence="2">
    <location>
        <begin position="471"/>
        <end position="481"/>
    </location>
</feature>
<feature type="helix" evidence="2">
    <location>
        <begin position="486"/>
        <end position="509"/>
    </location>
</feature>
<feature type="strand" evidence="2">
    <location>
        <begin position="510"/>
        <end position="512"/>
    </location>
</feature>
<feature type="helix" evidence="2">
    <location>
        <begin position="513"/>
        <end position="525"/>
    </location>
</feature>
<feature type="helix" evidence="2">
    <location>
        <begin position="530"/>
        <end position="539"/>
    </location>
</feature>
<feature type="strand" evidence="2">
    <location>
        <begin position="544"/>
        <end position="548"/>
    </location>
</feature>
<name>CVC2_HHV8P</name>
<dbReference type="EMBL" id="AF148805">
    <property type="protein sequence ID" value="ABD28870.1"/>
    <property type="molecule type" value="Genomic_DNA"/>
</dbReference>
<dbReference type="RefSeq" id="YP_001129372.1">
    <property type="nucleotide sequence ID" value="NC_009333.1"/>
</dbReference>
<dbReference type="PDB" id="6PPB">
    <property type="method" value="EM"/>
    <property type="resolution" value="4.30 A"/>
    <property type="chains" value="l/m=1-549"/>
</dbReference>
<dbReference type="PDB" id="6PPH">
    <property type="method" value="EM"/>
    <property type="resolution" value="3.80 A"/>
    <property type="chains" value="l/m=1-549"/>
</dbReference>
<dbReference type="PDB" id="7NXQ">
    <property type="method" value="X-ray"/>
    <property type="resolution" value="2.42 A"/>
    <property type="chains" value="A/B/C/D/E/F/G/H/I/J=122-549"/>
</dbReference>
<dbReference type="PDBsum" id="6PPB"/>
<dbReference type="PDBsum" id="6PPH"/>
<dbReference type="PDBsum" id="7NXQ"/>
<dbReference type="SMR" id="Q2HRB3"/>
<dbReference type="DNASU" id="4961508"/>
<dbReference type="GeneID" id="4961508"/>
<dbReference type="KEGG" id="vg:4961508"/>
<dbReference type="Proteomes" id="UP000000942">
    <property type="component" value="Segment"/>
</dbReference>
<dbReference type="GO" id="GO:0043657">
    <property type="term" value="C:host cell"/>
    <property type="evidence" value="ECO:0007669"/>
    <property type="project" value="GOC"/>
</dbReference>
<dbReference type="GO" id="GO:0042025">
    <property type="term" value="C:host cell nucleus"/>
    <property type="evidence" value="ECO:0007669"/>
    <property type="project" value="UniProtKB-SubCell"/>
</dbReference>
<dbReference type="GO" id="GO:0019028">
    <property type="term" value="C:viral capsid"/>
    <property type="evidence" value="ECO:0007669"/>
    <property type="project" value="UniProtKB-KW"/>
</dbReference>
<dbReference type="GO" id="GO:0046718">
    <property type="term" value="P:symbiont entry into host cell"/>
    <property type="evidence" value="ECO:0007669"/>
    <property type="project" value="UniProtKB-KW"/>
</dbReference>
<dbReference type="GO" id="GO:0019072">
    <property type="term" value="P:viral genome packaging"/>
    <property type="evidence" value="ECO:0007669"/>
    <property type="project" value="InterPro"/>
</dbReference>
<dbReference type="GO" id="GO:0075732">
    <property type="term" value="P:viral penetration into host nucleus"/>
    <property type="evidence" value="ECO:0007669"/>
    <property type="project" value="UniProtKB-KW"/>
</dbReference>
<dbReference type="HAMAP" id="MF_04025">
    <property type="entry name" value="HSV_CVC2"/>
    <property type="match status" value="1"/>
</dbReference>
<dbReference type="InterPro" id="IPR002493">
    <property type="entry name" value="Herpes_UL25"/>
</dbReference>
<dbReference type="Pfam" id="PF01499">
    <property type="entry name" value="Herpes_UL25"/>
    <property type="match status" value="1"/>
</dbReference>
<organism>
    <name type="scientific">Human herpesvirus 8 type P (isolate GK18)</name>
    <name type="common">HHV-8</name>
    <name type="synonym">Kaposi's sarcoma-associated herpesvirus</name>
    <dbReference type="NCBI Taxonomy" id="868565"/>
    <lineage>
        <taxon>Viruses</taxon>
        <taxon>Duplodnaviria</taxon>
        <taxon>Heunggongvirae</taxon>
        <taxon>Peploviricota</taxon>
        <taxon>Herviviricetes</taxon>
        <taxon>Herpesvirales</taxon>
        <taxon>Orthoherpesviridae</taxon>
        <taxon>Gammaherpesvirinae</taxon>
        <taxon>Rhadinovirus</taxon>
        <taxon>Rhadinovirus humangamma8</taxon>
        <taxon>Human herpesvirus 8</taxon>
    </lineage>
</organism>
<comment type="function">
    <text evidence="1">Capsid vertex-specific component that plays a role during viral DNA encapsidation, assuring correct genome cleavage and presumably stabilizing capsids that contain full-length viral genomes. Participates in the interaction between the capsid and the tegument through interaction with the large tegument protein/LTP.</text>
</comment>
<comment type="subunit">
    <text evidence="1">Heterodimerizes with CVC1. Interacts with major capsid protein/MCP and triplex capsid protein 1/TRX1 at the pentamer vertices. Interacts with the large tegument protein/LTP.</text>
</comment>
<comment type="subcellular location">
    <subcellularLocation>
        <location evidence="1">Virion</location>
    </subcellularLocation>
    <subcellularLocation>
        <location evidence="1">Host nucleus</location>
    </subcellularLocation>
</comment>
<comment type="similarity">
    <text evidence="1">Belongs to the herpesviridae CVC2 protein family.</text>
</comment>
<evidence type="ECO:0000255" key="1">
    <source>
        <dbReference type="HAMAP-Rule" id="MF_04025"/>
    </source>
</evidence>
<evidence type="ECO:0007829" key="2">
    <source>
        <dbReference type="PDB" id="7NXQ"/>
    </source>
</evidence>
<gene>
    <name evidence="1" type="primary">CVC2</name>
    <name type="ordered locus">ORF19</name>
</gene>
<proteinExistence type="evidence at protein level"/>
<protein>
    <recommendedName>
        <fullName evidence="1">Capsid vertex component 2</fullName>
    </recommendedName>
</protein>
<keyword id="KW-0002">3D-structure</keyword>
<keyword id="KW-0167">Capsid protein</keyword>
<keyword id="KW-1048">Host nucleus</keyword>
<keyword id="KW-0945">Host-virus interaction</keyword>
<keyword id="KW-1185">Reference proteome</keyword>
<keyword id="KW-0231">Viral genome packaging</keyword>
<keyword id="KW-1163">Viral penetration into host nucleus</keyword>
<keyword id="KW-1188">Viral release from host cell</keyword>
<keyword id="KW-0946">Virion</keyword>
<keyword id="KW-1160">Virus entry into host cell</keyword>
<accession>Q2HRB3</accession>
<organismHost>
    <name type="scientific">Homo sapiens</name>
    <name type="common">Human</name>
    <dbReference type="NCBI Taxonomy" id="9606"/>
</organismHost>